<keyword id="KW-0004">4Fe-4S</keyword>
<keyword id="KW-0963">Cytoplasm</keyword>
<keyword id="KW-0408">Iron</keyword>
<keyword id="KW-0411">Iron-sulfur</keyword>
<keyword id="KW-0479">Metal-binding</keyword>
<keyword id="KW-0949">S-adenosyl-L-methionine</keyword>
<keyword id="KW-0808">Transferase</keyword>
<sequence length="320" mass="36153">MVTVVDRVTNRRLRHPEKAHRPDTSVQKKPDWIRVKAPTSPVYKETHGIVRTHKLVTVCEEAGCPNIGECWSQRHASFMILGEICTRACAFCNVATGIPLAVDDDEPERVADAVARMELKHVVITSVDRDDLADGGAEHFAKVIYAIRRKAPKTTIEVLTPDFRHKDGALEVVVAAKPDVFNHNLETVPSKYLKVRPGARYFHSIRLLQRVKELDPTIFTKSGIMVGLGEERNEILQLMDDLRTADVDFMTIGQYLQPTRKHHPVIRFVPPEEFESFAKIGKVKGFLHMASNPLTRSSHHAGDDFAILQKARDEKFALQR</sequence>
<comment type="function">
    <text evidence="1">Catalyzes the radical-mediated insertion of two sulfur atoms into the C-6 and C-8 positions of the octanoyl moiety bound to the lipoyl domains of lipoate-dependent enzymes, thereby converting the octanoylated domains into lipoylated derivatives.</text>
</comment>
<comment type="catalytic activity">
    <reaction evidence="1">
        <text>[[Fe-S] cluster scaffold protein carrying a second [4Fe-4S](2+) cluster] + N(6)-octanoyl-L-lysyl-[protein] + 2 oxidized [2Fe-2S]-[ferredoxin] + 2 S-adenosyl-L-methionine + 4 H(+) = [[Fe-S] cluster scaffold protein] + N(6)-[(R)-dihydrolipoyl]-L-lysyl-[protein] + 4 Fe(3+) + 2 hydrogen sulfide + 2 5'-deoxyadenosine + 2 L-methionine + 2 reduced [2Fe-2S]-[ferredoxin]</text>
        <dbReference type="Rhea" id="RHEA:16585"/>
        <dbReference type="Rhea" id="RHEA-COMP:9928"/>
        <dbReference type="Rhea" id="RHEA-COMP:10000"/>
        <dbReference type="Rhea" id="RHEA-COMP:10001"/>
        <dbReference type="Rhea" id="RHEA-COMP:10475"/>
        <dbReference type="Rhea" id="RHEA-COMP:14568"/>
        <dbReference type="Rhea" id="RHEA-COMP:14569"/>
        <dbReference type="ChEBI" id="CHEBI:15378"/>
        <dbReference type="ChEBI" id="CHEBI:17319"/>
        <dbReference type="ChEBI" id="CHEBI:29034"/>
        <dbReference type="ChEBI" id="CHEBI:29919"/>
        <dbReference type="ChEBI" id="CHEBI:33722"/>
        <dbReference type="ChEBI" id="CHEBI:33737"/>
        <dbReference type="ChEBI" id="CHEBI:33738"/>
        <dbReference type="ChEBI" id="CHEBI:57844"/>
        <dbReference type="ChEBI" id="CHEBI:59789"/>
        <dbReference type="ChEBI" id="CHEBI:78809"/>
        <dbReference type="ChEBI" id="CHEBI:83100"/>
        <dbReference type="EC" id="2.8.1.8"/>
    </reaction>
</comment>
<comment type="cofactor">
    <cofactor evidence="1">
        <name>[4Fe-4S] cluster</name>
        <dbReference type="ChEBI" id="CHEBI:49883"/>
    </cofactor>
    <text evidence="1">Binds 2 [4Fe-4S] clusters per subunit. One cluster is coordinated with 3 cysteines and an exchangeable S-adenosyl-L-methionine.</text>
</comment>
<comment type="pathway">
    <text evidence="1">Protein modification; protein lipoylation via endogenous pathway; protein N(6)-(lipoyl)lysine from octanoyl-[acyl-carrier-protein]: step 2/2.</text>
</comment>
<comment type="subcellular location">
    <subcellularLocation>
        <location evidence="1">Cytoplasm</location>
    </subcellularLocation>
</comment>
<comment type="similarity">
    <text evidence="1">Belongs to the radical SAM superfamily. Lipoyl synthase family.</text>
</comment>
<organism>
    <name type="scientific">Bartonella tribocorum (strain CIP 105476 / IBS 506)</name>
    <dbReference type="NCBI Taxonomy" id="382640"/>
    <lineage>
        <taxon>Bacteria</taxon>
        <taxon>Pseudomonadati</taxon>
        <taxon>Pseudomonadota</taxon>
        <taxon>Alphaproteobacteria</taxon>
        <taxon>Hyphomicrobiales</taxon>
        <taxon>Bartonellaceae</taxon>
        <taxon>Bartonella</taxon>
    </lineage>
</organism>
<reference key="1">
    <citation type="journal article" date="2007" name="Nat. Genet.">
        <title>Genomic analysis of Bartonella identifies type IV secretion systems as host adaptability factors.</title>
        <authorList>
            <person name="Saenz H.L."/>
            <person name="Engel P."/>
            <person name="Stoeckli M.C."/>
            <person name="Lanz C."/>
            <person name="Raddatz G."/>
            <person name="Vayssier-Taussat M."/>
            <person name="Birtles R."/>
            <person name="Schuster S.C."/>
            <person name="Dehio C."/>
        </authorList>
    </citation>
    <scope>NUCLEOTIDE SEQUENCE [LARGE SCALE GENOMIC DNA]</scope>
    <source>
        <strain>CIP 105476 / IBS 506</strain>
    </source>
</reference>
<accession>A9IS79</accession>
<protein>
    <recommendedName>
        <fullName evidence="1">Lipoyl synthase</fullName>
        <ecNumber evidence="1">2.8.1.8</ecNumber>
    </recommendedName>
    <alternativeName>
        <fullName evidence="1">Lip-syn</fullName>
        <shortName evidence="1">LS</shortName>
    </alternativeName>
    <alternativeName>
        <fullName evidence="1">Lipoate synthase</fullName>
    </alternativeName>
    <alternativeName>
        <fullName evidence="1">Lipoic acid synthase</fullName>
    </alternativeName>
    <alternativeName>
        <fullName evidence="1">Sulfur insertion protein LipA</fullName>
    </alternativeName>
</protein>
<name>LIPA_BART1</name>
<gene>
    <name evidence="1" type="primary">lipA</name>
    <name type="ordered locus">BT_0866</name>
</gene>
<dbReference type="EC" id="2.8.1.8" evidence="1"/>
<dbReference type="EMBL" id="AM260525">
    <property type="protein sequence ID" value="CAK01271.1"/>
    <property type="molecule type" value="Genomic_DNA"/>
</dbReference>
<dbReference type="RefSeq" id="WP_012231419.1">
    <property type="nucleotide sequence ID" value="NC_010161.1"/>
</dbReference>
<dbReference type="SMR" id="A9IS79"/>
<dbReference type="KEGG" id="btr:BT_0866"/>
<dbReference type="eggNOG" id="COG0320">
    <property type="taxonomic scope" value="Bacteria"/>
</dbReference>
<dbReference type="HOGENOM" id="CLU_033144_2_1_5"/>
<dbReference type="UniPathway" id="UPA00538">
    <property type="reaction ID" value="UER00593"/>
</dbReference>
<dbReference type="Proteomes" id="UP000001592">
    <property type="component" value="Chromosome"/>
</dbReference>
<dbReference type="GO" id="GO:0005737">
    <property type="term" value="C:cytoplasm"/>
    <property type="evidence" value="ECO:0007669"/>
    <property type="project" value="UniProtKB-SubCell"/>
</dbReference>
<dbReference type="GO" id="GO:0051539">
    <property type="term" value="F:4 iron, 4 sulfur cluster binding"/>
    <property type="evidence" value="ECO:0007669"/>
    <property type="project" value="UniProtKB-UniRule"/>
</dbReference>
<dbReference type="GO" id="GO:0016992">
    <property type="term" value="F:lipoate synthase activity"/>
    <property type="evidence" value="ECO:0007669"/>
    <property type="project" value="UniProtKB-UniRule"/>
</dbReference>
<dbReference type="GO" id="GO:0046872">
    <property type="term" value="F:metal ion binding"/>
    <property type="evidence" value="ECO:0007669"/>
    <property type="project" value="UniProtKB-KW"/>
</dbReference>
<dbReference type="CDD" id="cd01335">
    <property type="entry name" value="Radical_SAM"/>
    <property type="match status" value="1"/>
</dbReference>
<dbReference type="FunFam" id="3.20.20.70:FF:000040">
    <property type="entry name" value="Lipoyl synthase"/>
    <property type="match status" value="1"/>
</dbReference>
<dbReference type="Gene3D" id="3.20.20.70">
    <property type="entry name" value="Aldolase class I"/>
    <property type="match status" value="1"/>
</dbReference>
<dbReference type="HAMAP" id="MF_00206">
    <property type="entry name" value="Lipoyl_synth"/>
    <property type="match status" value="1"/>
</dbReference>
<dbReference type="InterPro" id="IPR013785">
    <property type="entry name" value="Aldolase_TIM"/>
</dbReference>
<dbReference type="InterPro" id="IPR006638">
    <property type="entry name" value="Elp3/MiaA/NifB-like_rSAM"/>
</dbReference>
<dbReference type="InterPro" id="IPR003698">
    <property type="entry name" value="Lipoyl_synth"/>
</dbReference>
<dbReference type="InterPro" id="IPR007197">
    <property type="entry name" value="rSAM"/>
</dbReference>
<dbReference type="NCBIfam" id="TIGR00510">
    <property type="entry name" value="lipA"/>
    <property type="match status" value="1"/>
</dbReference>
<dbReference type="NCBIfam" id="NF004019">
    <property type="entry name" value="PRK05481.1"/>
    <property type="match status" value="1"/>
</dbReference>
<dbReference type="NCBIfam" id="NF009544">
    <property type="entry name" value="PRK12928.1"/>
    <property type="match status" value="1"/>
</dbReference>
<dbReference type="PANTHER" id="PTHR10949">
    <property type="entry name" value="LIPOYL SYNTHASE"/>
    <property type="match status" value="1"/>
</dbReference>
<dbReference type="PANTHER" id="PTHR10949:SF0">
    <property type="entry name" value="LIPOYL SYNTHASE, MITOCHONDRIAL"/>
    <property type="match status" value="1"/>
</dbReference>
<dbReference type="Pfam" id="PF04055">
    <property type="entry name" value="Radical_SAM"/>
    <property type="match status" value="1"/>
</dbReference>
<dbReference type="PIRSF" id="PIRSF005963">
    <property type="entry name" value="Lipoyl_synth"/>
    <property type="match status" value="1"/>
</dbReference>
<dbReference type="SFLD" id="SFLDF00271">
    <property type="entry name" value="lipoyl_synthase"/>
    <property type="match status" value="1"/>
</dbReference>
<dbReference type="SFLD" id="SFLDG01058">
    <property type="entry name" value="lipoyl_synthase_like"/>
    <property type="match status" value="1"/>
</dbReference>
<dbReference type="SMART" id="SM00729">
    <property type="entry name" value="Elp3"/>
    <property type="match status" value="1"/>
</dbReference>
<dbReference type="SUPFAM" id="SSF102114">
    <property type="entry name" value="Radical SAM enzymes"/>
    <property type="match status" value="1"/>
</dbReference>
<dbReference type="PROSITE" id="PS51918">
    <property type="entry name" value="RADICAL_SAM"/>
    <property type="match status" value="1"/>
</dbReference>
<feature type="chain" id="PRO_1000077949" description="Lipoyl synthase">
    <location>
        <begin position="1"/>
        <end position="320"/>
    </location>
</feature>
<feature type="domain" description="Radical SAM core" evidence="2">
    <location>
        <begin position="71"/>
        <end position="287"/>
    </location>
</feature>
<feature type="region of interest" description="Disordered" evidence="3">
    <location>
        <begin position="1"/>
        <end position="29"/>
    </location>
</feature>
<feature type="compositionally biased region" description="Basic and acidic residues" evidence="3">
    <location>
        <begin position="19"/>
        <end position="29"/>
    </location>
</feature>
<feature type="binding site" evidence="1">
    <location>
        <position position="59"/>
    </location>
    <ligand>
        <name>[4Fe-4S] cluster</name>
        <dbReference type="ChEBI" id="CHEBI:49883"/>
        <label>1</label>
    </ligand>
</feature>
<feature type="binding site" evidence="1">
    <location>
        <position position="64"/>
    </location>
    <ligand>
        <name>[4Fe-4S] cluster</name>
        <dbReference type="ChEBI" id="CHEBI:49883"/>
        <label>1</label>
    </ligand>
</feature>
<feature type="binding site" evidence="1">
    <location>
        <position position="70"/>
    </location>
    <ligand>
        <name>[4Fe-4S] cluster</name>
        <dbReference type="ChEBI" id="CHEBI:49883"/>
        <label>1</label>
    </ligand>
</feature>
<feature type="binding site" evidence="1">
    <location>
        <position position="85"/>
    </location>
    <ligand>
        <name>[4Fe-4S] cluster</name>
        <dbReference type="ChEBI" id="CHEBI:49883"/>
        <label>2</label>
        <note>4Fe-4S-S-AdoMet</note>
    </ligand>
</feature>
<feature type="binding site" evidence="1">
    <location>
        <position position="89"/>
    </location>
    <ligand>
        <name>[4Fe-4S] cluster</name>
        <dbReference type="ChEBI" id="CHEBI:49883"/>
        <label>2</label>
        <note>4Fe-4S-S-AdoMet</note>
    </ligand>
</feature>
<feature type="binding site" evidence="1">
    <location>
        <position position="92"/>
    </location>
    <ligand>
        <name>[4Fe-4S] cluster</name>
        <dbReference type="ChEBI" id="CHEBI:49883"/>
        <label>2</label>
        <note>4Fe-4S-S-AdoMet</note>
    </ligand>
</feature>
<feature type="binding site" evidence="1">
    <location>
        <position position="298"/>
    </location>
    <ligand>
        <name>[4Fe-4S] cluster</name>
        <dbReference type="ChEBI" id="CHEBI:49883"/>
        <label>1</label>
    </ligand>
</feature>
<proteinExistence type="inferred from homology"/>
<evidence type="ECO:0000255" key="1">
    <source>
        <dbReference type="HAMAP-Rule" id="MF_00206"/>
    </source>
</evidence>
<evidence type="ECO:0000255" key="2">
    <source>
        <dbReference type="PROSITE-ProRule" id="PRU01266"/>
    </source>
</evidence>
<evidence type="ECO:0000256" key="3">
    <source>
        <dbReference type="SAM" id="MobiDB-lite"/>
    </source>
</evidence>